<name>RURE_ECTOL</name>
<reference key="1">
    <citation type="journal article" date="1990" name="J. Mol. Biol.">
        <title>Rubredoxin reductase of Pseudomonas oleovorans. Structural relationship to other flavoprotein oxidoreductases based on one NAD and two FAD fingerprints.</title>
        <authorList>
            <person name="Eggink G."/>
            <person name="Engel H."/>
            <person name="Vriend G."/>
            <person name="Terpstra P."/>
            <person name="Witholt B."/>
        </authorList>
    </citation>
    <scope>NUCLEOTIDE SEQUENCE [GENOMIC DNA]</scope>
    <scope>FUNCTION IN ALKANE DEGRADATION</scope>
    <source>
        <strain>ATCC 29347 / CIP 105816 / NRRL B-14683 / TF4-1L</strain>
    </source>
</reference>
<reference key="2">
    <citation type="journal article" date="1998" name="Biochemistry">
        <title>Electron transfer from flavin to iron in the Pseudomonas oleovorans rubredoxin reductase-rubredoxin electron transfer complex.</title>
        <authorList>
            <person name="Lee H.J."/>
            <person name="Basran J."/>
            <person name="Scrutton N.S."/>
        </authorList>
    </citation>
    <scope>ELECTRON TRANSFER</scope>
    <scope>COFACTOR</scope>
</reference>
<reference key="3">
    <citation type="journal article" date="2000" name="Mol. Microbiol.">
        <title>A positive feedback mechanism controls expression of AlkS, the transcriptional regulator of the Pseudomonas oleovorans alkane degradation pathway.</title>
        <authorList>
            <person name="Canosa I."/>
            <person name="Sanchez-Romero J.M."/>
            <person name="Yuste L."/>
            <person name="Rojo F."/>
        </authorList>
    </citation>
    <scope>INDUCTION</scope>
</reference>
<sequence>MAIVVVGAGTAGVNAAFWLRQYGYKGEIRIFSRESVAPYQRPPLSKAFLTSEIAESAVPLKPEGFYTNNNITISLNTPIVSIDVGRKIVSSKDGKEYAYEKLILATPASARRLTCEGSELSGVCYLRSMEDAKNLRRKLVESASVVVLGGGVIGLEVASAAVGLGKRVTVIEATPRVMARVVTPAAANLVRARLEAEGIEFKLNAKLTSIKGRNGHVEQCVLESGEEIQADLIVVGIGAIPELELATEAALEVSNGVVVDDQMCTSDTSIYAIGDCAMARNPFWGTMVRLETIHNAVTHAQIVASSICGTSTPAPTPPRFWSDLKGMALQGLGALKDYDKLVVAINNETLELEVLAYKQERLIATETINLPKRQGALAGSIKLPD</sequence>
<geneLocation type="plasmid">
    <name>OCT</name>
</geneLocation>
<feature type="chain" id="PRO_0000167650" description="Rubredoxin-NAD(+) reductase">
    <location>
        <begin position="1"/>
        <end position="385"/>
    </location>
</feature>
<feature type="binding site" evidence="2">
    <location>
        <begin position="8"/>
        <end position="11"/>
    </location>
    <ligand>
        <name>FAD</name>
        <dbReference type="ChEBI" id="CHEBI:57692"/>
    </ligand>
</feature>
<feature type="binding site" evidence="2">
    <location>
        <begin position="32"/>
        <end position="33"/>
    </location>
    <ligand>
        <name>FAD</name>
        <dbReference type="ChEBI" id="CHEBI:57692"/>
    </ligand>
</feature>
<feature type="binding site" evidence="2">
    <location>
        <position position="79"/>
    </location>
    <ligand>
        <name>FAD</name>
        <dbReference type="ChEBI" id="CHEBI:57692"/>
    </ligand>
</feature>
<feature type="binding site" evidence="2">
    <location>
        <position position="156"/>
    </location>
    <ligand>
        <name>FAD</name>
        <dbReference type="ChEBI" id="CHEBI:57692"/>
    </ligand>
</feature>
<feature type="binding site" evidence="2">
    <location>
        <position position="275"/>
    </location>
    <ligand>
        <name>FAD</name>
        <dbReference type="ChEBI" id="CHEBI:57692"/>
    </ligand>
</feature>
<feature type="binding site" evidence="2">
    <location>
        <position position="293"/>
    </location>
    <ligand>
        <name>FAD</name>
        <dbReference type="ChEBI" id="CHEBI:57692"/>
    </ligand>
</feature>
<dbReference type="EC" id="1.18.1.1"/>
<dbReference type="EMBL" id="AJ245436">
    <property type="protein sequence ID" value="CAB54063.1"/>
    <property type="molecule type" value="Genomic_DNA"/>
</dbReference>
<dbReference type="PIR" id="S09114">
    <property type="entry name" value="S09114"/>
</dbReference>
<dbReference type="SMR" id="P17052"/>
<dbReference type="KEGG" id="ag:CAB54063"/>
<dbReference type="BioCyc" id="MetaCyc:MONOMER-1021"/>
<dbReference type="UniPathway" id="UPA00191"/>
<dbReference type="GO" id="GO:0005737">
    <property type="term" value="C:cytoplasm"/>
    <property type="evidence" value="ECO:0007669"/>
    <property type="project" value="UniProtKB-SubCell"/>
</dbReference>
<dbReference type="GO" id="GO:0050660">
    <property type="term" value="F:flavin adenine dinucleotide binding"/>
    <property type="evidence" value="ECO:0000314"/>
    <property type="project" value="UniProtKB"/>
</dbReference>
<dbReference type="GO" id="GO:0016651">
    <property type="term" value="F:oxidoreductase activity, acting on NAD(P)H"/>
    <property type="evidence" value="ECO:0007669"/>
    <property type="project" value="TreeGrafter"/>
</dbReference>
<dbReference type="GO" id="GO:0015044">
    <property type="term" value="F:rubredoxin-NAD+ reductase activity"/>
    <property type="evidence" value="ECO:0007669"/>
    <property type="project" value="UniProtKB-EC"/>
</dbReference>
<dbReference type="GO" id="GO:0015046">
    <property type="term" value="F:rubredoxin-NADP+ reductase activity"/>
    <property type="evidence" value="ECO:0000314"/>
    <property type="project" value="UniProtKB"/>
</dbReference>
<dbReference type="GO" id="GO:0043448">
    <property type="term" value="P:alkane catabolic process"/>
    <property type="evidence" value="ECO:0007669"/>
    <property type="project" value="UniProtKB-UniPathway"/>
</dbReference>
<dbReference type="Gene3D" id="3.30.390.30">
    <property type="match status" value="1"/>
</dbReference>
<dbReference type="Gene3D" id="3.50.50.60">
    <property type="entry name" value="FAD/NAD(P)-binding domain"/>
    <property type="match status" value="2"/>
</dbReference>
<dbReference type="InterPro" id="IPR050446">
    <property type="entry name" value="FAD-oxidoreductase/Apoptosis"/>
</dbReference>
<dbReference type="InterPro" id="IPR036188">
    <property type="entry name" value="FAD/NAD-bd_sf"/>
</dbReference>
<dbReference type="InterPro" id="IPR023753">
    <property type="entry name" value="FAD/NAD-binding_dom"/>
</dbReference>
<dbReference type="InterPro" id="IPR016156">
    <property type="entry name" value="FAD/NAD-linked_Rdtase_dimer_sf"/>
</dbReference>
<dbReference type="InterPro" id="IPR028202">
    <property type="entry name" value="Reductase_C"/>
</dbReference>
<dbReference type="PANTHER" id="PTHR43557">
    <property type="entry name" value="APOPTOSIS-INDUCING FACTOR 1"/>
    <property type="match status" value="1"/>
</dbReference>
<dbReference type="PANTHER" id="PTHR43557:SF2">
    <property type="entry name" value="RIESKE DOMAIN-CONTAINING PROTEIN-RELATED"/>
    <property type="match status" value="1"/>
</dbReference>
<dbReference type="Pfam" id="PF07992">
    <property type="entry name" value="Pyr_redox_2"/>
    <property type="match status" value="1"/>
</dbReference>
<dbReference type="Pfam" id="PF14759">
    <property type="entry name" value="Reductase_C"/>
    <property type="match status" value="1"/>
</dbReference>
<dbReference type="PRINTS" id="PR00368">
    <property type="entry name" value="FADPNR"/>
</dbReference>
<dbReference type="PRINTS" id="PR00411">
    <property type="entry name" value="PNDRDTASEI"/>
</dbReference>
<dbReference type="SUPFAM" id="SSF51905">
    <property type="entry name" value="FAD/NAD(P)-binding domain"/>
    <property type="match status" value="1"/>
</dbReference>
<dbReference type="SUPFAM" id="SSF55424">
    <property type="entry name" value="FAD/NAD-linked reductases, dimerisation (C-terminal) domain"/>
    <property type="match status" value="1"/>
</dbReference>
<accession>P17052</accession>
<keyword id="KW-0963">Cytoplasm</keyword>
<keyword id="KW-0274">FAD</keyword>
<keyword id="KW-0285">Flavoprotein</keyword>
<keyword id="KW-0520">NAD</keyword>
<keyword id="KW-0560">Oxidoreductase</keyword>
<keyword id="KW-0614">Plasmid</keyword>
<gene>
    <name type="primary">alkT</name>
</gene>
<comment type="function">
    <text evidence="4">Involved in the hydrocarbon hydroxylating system, which transfers electrons from NADH to rubredoxin reductase and then through rubredoxin to alkane 1 monooxygenase.</text>
</comment>
<comment type="catalytic activity">
    <reaction>
        <text>2 reduced [rubredoxin] + NAD(+) + H(+) = 2 oxidized [rubredoxin] + NADH</text>
        <dbReference type="Rhea" id="RHEA:18597"/>
        <dbReference type="Rhea" id="RHEA-COMP:10302"/>
        <dbReference type="Rhea" id="RHEA-COMP:10303"/>
        <dbReference type="ChEBI" id="CHEBI:15378"/>
        <dbReference type="ChEBI" id="CHEBI:29033"/>
        <dbReference type="ChEBI" id="CHEBI:29034"/>
        <dbReference type="ChEBI" id="CHEBI:57540"/>
        <dbReference type="ChEBI" id="CHEBI:57945"/>
        <dbReference type="EC" id="1.18.1.1"/>
    </reaction>
</comment>
<comment type="cofactor">
    <cofactor evidence="5">
        <name>FAD</name>
        <dbReference type="ChEBI" id="CHEBI:57692"/>
    </cofactor>
</comment>
<comment type="pathway">
    <text>Hydrocarbon metabolism; alkane degradation.</text>
</comment>
<comment type="subunit">
    <text evidence="1">Homodimer.</text>
</comment>
<comment type="subcellular location">
    <subcellularLocation>
        <location evidence="1">Cytoplasm</location>
    </subcellularLocation>
</comment>
<comment type="induction">
    <text evidence="3">Induced by AlkS.</text>
</comment>
<comment type="similarity">
    <text evidence="6">Belongs to the FAD-dependent oxidoreductase family.</text>
</comment>
<protein>
    <recommendedName>
        <fullName>Rubredoxin-NAD(+) reductase</fullName>
        <shortName>RdxR</shortName>
        <ecNumber>1.18.1.1</ecNumber>
    </recommendedName>
</protein>
<evidence type="ECO:0000250" key="1"/>
<evidence type="ECO:0000250" key="2">
    <source>
        <dbReference type="UniProtKB" id="Q9HTK9"/>
    </source>
</evidence>
<evidence type="ECO:0000269" key="3">
    <source>
    </source>
</evidence>
<evidence type="ECO:0000269" key="4">
    <source>
    </source>
</evidence>
<evidence type="ECO:0000269" key="5">
    <source>
    </source>
</evidence>
<evidence type="ECO:0000305" key="6"/>
<proteinExistence type="evidence at protein level"/>
<organism>
    <name type="scientific">Ectopseudomonas oleovorans</name>
    <name type="common">Pseudomonas oleovorans</name>
    <dbReference type="NCBI Taxonomy" id="301"/>
    <lineage>
        <taxon>Bacteria</taxon>
        <taxon>Pseudomonadati</taxon>
        <taxon>Pseudomonadota</taxon>
        <taxon>Gammaproteobacteria</taxon>
        <taxon>Pseudomonadales</taxon>
        <taxon>Pseudomonadaceae</taxon>
        <taxon>Ectopseudomonas</taxon>
    </lineage>
</organism>